<organism>
    <name type="scientific">Bradyrhizobium sp. (strain ORS 278)</name>
    <dbReference type="NCBI Taxonomy" id="114615"/>
    <lineage>
        <taxon>Bacteria</taxon>
        <taxon>Pseudomonadati</taxon>
        <taxon>Pseudomonadota</taxon>
        <taxon>Alphaproteobacteria</taxon>
        <taxon>Hyphomicrobiales</taxon>
        <taxon>Nitrobacteraceae</taxon>
        <taxon>Bradyrhizobium</taxon>
    </lineage>
</organism>
<name>RL4_BRASO</name>
<reference key="1">
    <citation type="journal article" date="2007" name="Science">
        <title>Legumes symbioses: absence of nod genes in photosynthetic bradyrhizobia.</title>
        <authorList>
            <person name="Giraud E."/>
            <person name="Moulin L."/>
            <person name="Vallenet D."/>
            <person name="Barbe V."/>
            <person name="Cytryn E."/>
            <person name="Avarre J.-C."/>
            <person name="Jaubert M."/>
            <person name="Simon D."/>
            <person name="Cartieaux F."/>
            <person name="Prin Y."/>
            <person name="Bena G."/>
            <person name="Hannibal L."/>
            <person name="Fardoux J."/>
            <person name="Kojadinovic M."/>
            <person name="Vuillet L."/>
            <person name="Lajus A."/>
            <person name="Cruveiller S."/>
            <person name="Rouy Z."/>
            <person name="Mangenot S."/>
            <person name="Segurens B."/>
            <person name="Dossat C."/>
            <person name="Franck W.L."/>
            <person name="Chang W.-S."/>
            <person name="Saunders E."/>
            <person name="Bruce D."/>
            <person name="Richardson P."/>
            <person name="Normand P."/>
            <person name="Dreyfus B."/>
            <person name="Pignol D."/>
            <person name="Stacey G."/>
            <person name="Emerich D."/>
            <person name="Vermeglio A."/>
            <person name="Medigue C."/>
            <person name="Sadowsky M."/>
        </authorList>
    </citation>
    <scope>NUCLEOTIDE SEQUENCE [LARGE SCALE GENOMIC DNA]</scope>
    <source>
        <strain>ORS 278</strain>
    </source>
</reference>
<gene>
    <name evidence="1" type="primary">rplD</name>
    <name type="ordered locus">BRADO3067</name>
</gene>
<proteinExistence type="inferred from homology"/>
<accession>A4YSJ3</accession>
<sequence length="206" mass="22242">MELKVTTLEGKEAGSVQLSDAIFGLEPRADIIQRCVQWQLNKRQAGTHKAKGRAEIWRTGKKMYKQKGTGGARHGSARVPQFRGGGRAFGPVVRSHATDLPKKVRALALKHALSAKAKDGDLVVLENATLEAAKTKALIGHFSGLGLTNALIIDGAELHNGFAAAARNIPNLDVLPIQGINVYDILRRQKLVLTKAAIDALEARFK</sequence>
<comment type="function">
    <text evidence="1">One of the primary rRNA binding proteins, this protein initially binds near the 5'-end of the 23S rRNA. It is important during the early stages of 50S assembly. It makes multiple contacts with different domains of the 23S rRNA in the assembled 50S subunit and ribosome.</text>
</comment>
<comment type="function">
    <text evidence="1">Forms part of the polypeptide exit tunnel.</text>
</comment>
<comment type="subunit">
    <text evidence="1">Part of the 50S ribosomal subunit.</text>
</comment>
<comment type="similarity">
    <text evidence="1">Belongs to the universal ribosomal protein uL4 family.</text>
</comment>
<dbReference type="EMBL" id="CU234118">
    <property type="protein sequence ID" value="CAL76869.1"/>
    <property type="molecule type" value="Genomic_DNA"/>
</dbReference>
<dbReference type="RefSeq" id="WP_006611839.1">
    <property type="nucleotide sequence ID" value="NC_009445.1"/>
</dbReference>
<dbReference type="SMR" id="A4YSJ3"/>
<dbReference type="STRING" id="114615.BRADO3067"/>
<dbReference type="KEGG" id="bra:BRADO3067"/>
<dbReference type="eggNOG" id="COG0088">
    <property type="taxonomic scope" value="Bacteria"/>
</dbReference>
<dbReference type="HOGENOM" id="CLU_041575_5_1_5"/>
<dbReference type="OrthoDB" id="9803201at2"/>
<dbReference type="Proteomes" id="UP000001994">
    <property type="component" value="Chromosome"/>
</dbReference>
<dbReference type="GO" id="GO:1990904">
    <property type="term" value="C:ribonucleoprotein complex"/>
    <property type="evidence" value="ECO:0007669"/>
    <property type="project" value="UniProtKB-KW"/>
</dbReference>
<dbReference type="GO" id="GO:0005840">
    <property type="term" value="C:ribosome"/>
    <property type="evidence" value="ECO:0007669"/>
    <property type="project" value="UniProtKB-KW"/>
</dbReference>
<dbReference type="GO" id="GO:0019843">
    <property type="term" value="F:rRNA binding"/>
    <property type="evidence" value="ECO:0007669"/>
    <property type="project" value="UniProtKB-UniRule"/>
</dbReference>
<dbReference type="GO" id="GO:0003735">
    <property type="term" value="F:structural constituent of ribosome"/>
    <property type="evidence" value="ECO:0007669"/>
    <property type="project" value="InterPro"/>
</dbReference>
<dbReference type="GO" id="GO:0006412">
    <property type="term" value="P:translation"/>
    <property type="evidence" value="ECO:0007669"/>
    <property type="project" value="UniProtKB-UniRule"/>
</dbReference>
<dbReference type="FunFam" id="3.40.1370.10:FF:000017">
    <property type="entry name" value="50S ribosomal protein L4"/>
    <property type="match status" value="1"/>
</dbReference>
<dbReference type="Gene3D" id="3.40.1370.10">
    <property type="match status" value="1"/>
</dbReference>
<dbReference type="HAMAP" id="MF_01328_B">
    <property type="entry name" value="Ribosomal_uL4_B"/>
    <property type="match status" value="1"/>
</dbReference>
<dbReference type="InterPro" id="IPR002136">
    <property type="entry name" value="Ribosomal_uL4"/>
</dbReference>
<dbReference type="InterPro" id="IPR013005">
    <property type="entry name" value="Ribosomal_uL4-like"/>
</dbReference>
<dbReference type="InterPro" id="IPR023574">
    <property type="entry name" value="Ribosomal_uL4_dom_sf"/>
</dbReference>
<dbReference type="NCBIfam" id="TIGR03953">
    <property type="entry name" value="rplD_bact"/>
    <property type="match status" value="1"/>
</dbReference>
<dbReference type="PANTHER" id="PTHR10746">
    <property type="entry name" value="50S RIBOSOMAL PROTEIN L4"/>
    <property type="match status" value="1"/>
</dbReference>
<dbReference type="PANTHER" id="PTHR10746:SF6">
    <property type="entry name" value="LARGE RIBOSOMAL SUBUNIT PROTEIN UL4M"/>
    <property type="match status" value="1"/>
</dbReference>
<dbReference type="Pfam" id="PF00573">
    <property type="entry name" value="Ribosomal_L4"/>
    <property type="match status" value="1"/>
</dbReference>
<dbReference type="SUPFAM" id="SSF52166">
    <property type="entry name" value="Ribosomal protein L4"/>
    <property type="match status" value="1"/>
</dbReference>
<keyword id="KW-1185">Reference proteome</keyword>
<keyword id="KW-0687">Ribonucleoprotein</keyword>
<keyword id="KW-0689">Ribosomal protein</keyword>
<keyword id="KW-0694">RNA-binding</keyword>
<keyword id="KW-0699">rRNA-binding</keyword>
<feature type="chain" id="PRO_1000052361" description="Large ribosomal subunit protein uL4">
    <location>
        <begin position="1"/>
        <end position="206"/>
    </location>
</feature>
<protein>
    <recommendedName>
        <fullName evidence="1">Large ribosomal subunit protein uL4</fullName>
    </recommendedName>
    <alternativeName>
        <fullName evidence="2">50S ribosomal protein L4</fullName>
    </alternativeName>
</protein>
<evidence type="ECO:0000255" key="1">
    <source>
        <dbReference type="HAMAP-Rule" id="MF_01328"/>
    </source>
</evidence>
<evidence type="ECO:0000305" key="2"/>